<sequence length="251" mass="29120">MESHIYRIIKNKLTIIIFTIIILIPCVDISLLLMTNTEYHPAYAFFLSGTSVGHASQMILLWFLPLYFLLLCADDSIQDYKTGYHYILISKVGRKKYCLEKIFTSFIISFLTMFLSLILNFLLVQVFFFKGTFKNDLDQIKFPDNSLYTFSMAHPYIAIVLFSIICCIMSGFVGALGSSLSLLFRDKKYAYPASFFIWFVLILKNKSLMFLFQPFTEYGYNVLLPILCLSIFIFLIIISSIVLYEAKYNEN</sequence>
<protein>
    <recommendedName>
        <fullName>Uncharacterized protein YybM</fullName>
    </recommendedName>
</protein>
<proteinExistence type="predicted"/>
<accession>P37491</accession>
<comment type="sequence caution" evidence="1">
    <conflict type="erroneous initiation">
        <sequence resource="EMBL-CDS" id="AAA22588"/>
    </conflict>
</comment>
<dbReference type="EMBL" id="M77837">
    <property type="protein sequence ID" value="AAA22588.1"/>
    <property type="status" value="ALT_INIT"/>
    <property type="molecule type" value="Genomic_DNA"/>
</dbReference>
<dbReference type="EMBL" id="D26185">
    <property type="protein sequence ID" value="BAA05190.1"/>
    <property type="molecule type" value="Genomic_DNA"/>
</dbReference>
<dbReference type="EMBL" id="AL009126">
    <property type="protein sequence ID" value="CAB16096.1"/>
    <property type="molecule type" value="Genomic_DNA"/>
</dbReference>
<dbReference type="PIR" id="S65984">
    <property type="entry name" value="S65984"/>
</dbReference>
<dbReference type="RefSeq" id="NP_391939.1">
    <property type="nucleotide sequence ID" value="NC_000964.3"/>
</dbReference>
<dbReference type="RefSeq" id="WP_003244187.1">
    <property type="nucleotide sequence ID" value="NZ_OZ025638.1"/>
</dbReference>
<dbReference type="FunCoup" id="P37491">
    <property type="interactions" value="22"/>
</dbReference>
<dbReference type="STRING" id="224308.BSU40590"/>
<dbReference type="TCDB" id="3.A.1.158.1">
    <property type="family name" value="the atp-binding cassette (abc) superfamily"/>
</dbReference>
<dbReference type="PaxDb" id="224308-BSU40590"/>
<dbReference type="DNASU" id="937824"/>
<dbReference type="EnsemblBacteria" id="CAB16096">
    <property type="protein sequence ID" value="CAB16096"/>
    <property type="gene ID" value="BSU_40590"/>
</dbReference>
<dbReference type="GeneID" id="937824"/>
<dbReference type="KEGG" id="bsu:BSU40590"/>
<dbReference type="PATRIC" id="fig|224308.179.peg.4401"/>
<dbReference type="eggNOG" id="ENOG5030GXE">
    <property type="taxonomic scope" value="Bacteria"/>
</dbReference>
<dbReference type="InParanoid" id="P37491"/>
<dbReference type="OrthoDB" id="2067518at2"/>
<dbReference type="BioCyc" id="BSUB:BSU40590-MONOMER"/>
<dbReference type="Proteomes" id="UP000001570">
    <property type="component" value="Chromosome"/>
</dbReference>
<feature type="chain" id="PRO_0000050068" description="Uncharacterized protein YybM">
    <location>
        <begin position="1"/>
        <end position="251"/>
    </location>
</feature>
<evidence type="ECO:0000305" key="1"/>
<name>YYBM_BACSU</name>
<keyword id="KW-1185">Reference proteome</keyword>
<organism>
    <name type="scientific">Bacillus subtilis (strain 168)</name>
    <dbReference type="NCBI Taxonomy" id="224308"/>
    <lineage>
        <taxon>Bacteria</taxon>
        <taxon>Bacillati</taxon>
        <taxon>Bacillota</taxon>
        <taxon>Bacilli</taxon>
        <taxon>Bacillales</taxon>
        <taxon>Bacillaceae</taxon>
        <taxon>Bacillus</taxon>
    </lineage>
</organism>
<gene>
    <name type="primary">yybM</name>
    <name type="ordered locus">BSU40590</name>
</gene>
<reference key="1">
    <citation type="journal article" date="1991" name="J. Bacteriol.">
        <title>In vitro type II binding of chromosomal DNA to membrane in Bacillus subtilis.</title>
        <authorList>
            <person name="Sato Y."/>
            <person name="McCollum M."/>
            <person name="McKenzie T."/>
            <person name="Laffan J."/>
            <person name="Zuberi A."/>
            <person name="Sueoka N."/>
        </authorList>
    </citation>
    <scope>PRELIMINARY NUCLEOTIDE SEQUENCE [GENOMIC DNA]</scope>
    <source>
        <strain>168</strain>
    </source>
</reference>
<reference key="2">
    <citation type="journal article" date="1994" name="DNA Res.">
        <title>Systematic sequencing of the 180 kilobase region of the Bacillus subtilis chromosome containing the replication origin.</title>
        <authorList>
            <person name="Ogasawara N."/>
            <person name="Nakai S."/>
            <person name="Yoshikawa H."/>
        </authorList>
    </citation>
    <scope>NUCLEOTIDE SEQUENCE [GENOMIC DNA]</scope>
    <source>
        <strain>168</strain>
    </source>
</reference>
<reference key="3">
    <citation type="journal article" date="1997" name="Nature">
        <title>The complete genome sequence of the Gram-positive bacterium Bacillus subtilis.</title>
        <authorList>
            <person name="Kunst F."/>
            <person name="Ogasawara N."/>
            <person name="Moszer I."/>
            <person name="Albertini A.M."/>
            <person name="Alloni G."/>
            <person name="Azevedo V."/>
            <person name="Bertero M.G."/>
            <person name="Bessieres P."/>
            <person name="Bolotin A."/>
            <person name="Borchert S."/>
            <person name="Borriss R."/>
            <person name="Boursier L."/>
            <person name="Brans A."/>
            <person name="Braun M."/>
            <person name="Brignell S.C."/>
            <person name="Bron S."/>
            <person name="Brouillet S."/>
            <person name="Bruschi C.V."/>
            <person name="Caldwell B."/>
            <person name="Capuano V."/>
            <person name="Carter N.M."/>
            <person name="Choi S.-K."/>
            <person name="Codani J.-J."/>
            <person name="Connerton I.F."/>
            <person name="Cummings N.J."/>
            <person name="Daniel R.A."/>
            <person name="Denizot F."/>
            <person name="Devine K.M."/>
            <person name="Duesterhoeft A."/>
            <person name="Ehrlich S.D."/>
            <person name="Emmerson P.T."/>
            <person name="Entian K.-D."/>
            <person name="Errington J."/>
            <person name="Fabret C."/>
            <person name="Ferrari E."/>
            <person name="Foulger D."/>
            <person name="Fritz C."/>
            <person name="Fujita M."/>
            <person name="Fujita Y."/>
            <person name="Fuma S."/>
            <person name="Galizzi A."/>
            <person name="Galleron N."/>
            <person name="Ghim S.-Y."/>
            <person name="Glaser P."/>
            <person name="Goffeau A."/>
            <person name="Golightly E.J."/>
            <person name="Grandi G."/>
            <person name="Guiseppi G."/>
            <person name="Guy B.J."/>
            <person name="Haga K."/>
            <person name="Haiech J."/>
            <person name="Harwood C.R."/>
            <person name="Henaut A."/>
            <person name="Hilbert H."/>
            <person name="Holsappel S."/>
            <person name="Hosono S."/>
            <person name="Hullo M.-F."/>
            <person name="Itaya M."/>
            <person name="Jones L.-M."/>
            <person name="Joris B."/>
            <person name="Karamata D."/>
            <person name="Kasahara Y."/>
            <person name="Klaerr-Blanchard M."/>
            <person name="Klein C."/>
            <person name="Kobayashi Y."/>
            <person name="Koetter P."/>
            <person name="Koningstein G."/>
            <person name="Krogh S."/>
            <person name="Kumano M."/>
            <person name="Kurita K."/>
            <person name="Lapidus A."/>
            <person name="Lardinois S."/>
            <person name="Lauber J."/>
            <person name="Lazarevic V."/>
            <person name="Lee S.-M."/>
            <person name="Levine A."/>
            <person name="Liu H."/>
            <person name="Masuda S."/>
            <person name="Mauel C."/>
            <person name="Medigue C."/>
            <person name="Medina N."/>
            <person name="Mellado R.P."/>
            <person name="Mizuno M."/>
            <person name="Moestl D."/>
            <person name="Nakai S."/>
            <person name="Noback M."/>
            <person name="Noone D."/>
            <person name="O'Reilly M."/>
            <person name="Ogawa K."/>
            <person name="Ogiwara A."/>
            <person name="Oudega B."/>
            <person name="Park S.-H."/>
            <person name="Parro V."/>
            <person name="Pohl T.M."/>
            <person name="Portetelle D."/>
            <person name="Porwollik S."/>
            <person name="Prescott A.M."/>
            <person name="Presecan E."/>
            <person name="Pujic P."/>
            <person name="Purnelle B."/>
            <person name="Rapoport G."/>
            <person name="Rey M."/>
            <person name="Reynolds S."/>
            <person name="Rieger M."/>
            <person name="Rivolta C."/>
            <person name="Rocha E."/>
            <person name="Roche B."/>
            <person name="Rose M."/>
            <person name="Sadaie Y."/>
            <person name="Sato T."/>
            <person name="Scanlan E."/>
            <person name="Schleich S."/>
            <person name="Schroeter R."/>
            <person name="Scoffone F."/>
            <person name="Sekiguchi J."/>
            <person name="Sekowska A."/>
            <person name="Seror S.J."/>
            <person name="Serror P."/>
            <person name="Shin B.-S."/>
            <person name="Soldo B."/>
            <person name="Sorokin A."/>
            <person name="Tacconi E."/>
            <person name="Takagi T."/>
            <person name="Takahashi H."/>
            <person name="Takemaru K."/>
            <person name="Takeuchi M."/>
            <person name="Tamakoshi A."/>
            <person name="Tanaka T."/>
            <person name="Terpstra P."/>
            <person name="Tognoni A."/>
            <person name="Tosato V."/>
            <person name="Uchiyama S."/>
            <person name="Vandenbol M."/>
            <person name="Vannier F."/>
            <person name="Vassarotti A."/>
            <person name="Viari A."/>
            <person name="Wambutt R."/>
            <person name="Wedler E."/>
            <person name="Wedler H."/>
            <person name="Weitzenegger T."/>
            <person name="Winters P."/>
            <person name="Wipat A."/>
            <person name="Yamamoto H."/>
            <person name="Yamane K."/>
            <person name="Yasumoto K."/>
            <person name="Yata K."/>
            <person name="Yoshida K."/>
            <person name="Yoshikawa H.-F."/>
            <person name="Zumstein E."/>
            <person name="Yoshikawa H."/>
            <person name="Danchin A."/>
        </authorList>
    </citation>
    <scope>NUCLEOTIDE SEQUENCE [LARGE SCALE GENOMIC DNA]</scope>
    <source>
        <strain>168</strain>
    </source>
</reference>